<dbReference type="EC" id="2.5.1.19" evidence="1"/>
<dbReference type="EMBL" id="BA000034">
    <property type="protein sequence ID" value="BAC63928.1"/>
    <property type="molecule type" value="Genomic_DNA"/>
</dbReference>
<dbReference type="SMR" id="P0CZ73"/>
<dbReference type="KEGG" id="sps:SPs0833"/>
<dbReference type="HOGENOM" id="CLU_024321_0_1_9"/>
<dbReference type="UniPathway" id="UPA00053">
    <property type="reaction ID" value="UER00089"/>
</dbReference>
<dbReference type="GO" id="GO:0005737">
    <property type="term" value="C:cytoplasm"/>
    <property type="evidence" value="ECO:0007669"/>
    <property type="project" value="UniProtKB-SubCell"/>
</dbReference>
<dbReference type="GO" id="GO:0003866">
    <property type="term" value="F:3-phosphoshikimate 1-carboxyvinyltransferase activity"/>
    <property type="evidence" value="ECO:0007669"/>
    <property type="project" value="UniProtKB-UniRule"/>
</dbReference>
<dbReference type="GO" id="GO:0008652">
    <property type="term" value="P:amino acid biosynthetic process"/>
    <property type="evidence" value="ECO:0007669"/>
    <property type="project" value="UniProtKB-KW"/>
</dbReference>
<dbReference type="GO" id="GO:0009073">
    <property type="term" value="P:aromatic amino acid family biosynthetic process"/>
    <property type="evidence" value="ECO:0007669"/>
    <property type="project" value="UniProtKB-KW"/>
</dbReference>
<dbReference type="GO" id="GO:0009423">
    <property type="term" value="P:chorismate biosynthetic process"/>
    <property type="evidence" value="ECO:0007669"/>
    <property type="project" value="UniProtKB-UniRule"/>
</dbReference>
<dbReference type="CDD" id="cd01556">
    <property type="entry name" value="EPSP_synthase"/>
    <property type="match status" value="1"/>
</dbReference>
<dbReference type="FunFam" id="3.65.10.10:FF:000005">
    <property type="entry name" value="3-phosphoshikimate 1-carboxyvinyltransferase"/>
    <property type="match status" value="1"/>
</dbReference>
<dbReference type="FunFam" id="3.65.10.10:FF:000006">
    <property type="entry name" value="3-phosphoshikimate 1-carboxyvinyltransferase"/>
    <property type="match status" value="1"/>
</dbReference>
<dbReference type="Gene3D" id="3.65.10.10">
    <property type="entry name" value="Enolpyruvate transferase domain"/>
    <property type="match status" value="2"/>
</dbReference>
<dbReference type="HAMAP" id="MF_00210">
    <property type="entry name" value="EPSP_synth"/>
    <property type="match status" value="1"/>
</dbReference>
<dbReference type="InterPro" id="IPR001986">
    <property type="entry name" value="Enolpyruvate_Tfrase_dom"/>
</dbReference>
<dbReference type="InterPro" id="IPR036968">
    <property type="entry name" value="Enolpyruvate_Tfrase_sf"/>
</dbReference>
<dbReference type="InterPro" id="IPR006264">
    <property type="entry name" value="EPSP_synthase"/>
</dbReference>
<dbReference type="InterPro" id="IPR023193">
    <property type="entry name" value="EPSP_synthase_CS"/>
</dbReference>
<dbReference type="InterPro" id="IPR013792">
    <property type="entry name" value="RNA3'P_cycl/enolpyr_Trfase_a/b"/>
</dbReference>
<dbReference type="NCBIfam" id="TIGR01356">
    <property type="entry name" value="aroA"/>
    <property type="match status" value="1"/>
</dbReference>
<dbReference type="PANTHER" id="PTHR21090">
    <property type="entry name" value="AROM/DEHYDROQUINATE SYNTHASE"/>
    <property type="match status" value="1"/>
</dbReference>
<dbReference type="PANTHER" id="PTHR21090:SF5">
    <property type="entry name" value="PENTAFUNCTIONAL AROM POLYPEPTIDE"/>
    <property type="match status" value="1"/>
</dbReference>
<dbReference type="Pfam" id="PF00275">
    <property type="entry name" value="EPSP_synthase"/>
    <property type="match status" value="1"/>
</dbReference>
<dbReference type="PIRSF" id="PIRSF000505">
    <property type="entry name" value="EPSPS"/>
    <property type="match status" value="1"/>
</dbReference>
<dbReference type="SUPFAM" id="SSF55205">
    <property type="entry name" value="EPT/RTPC-like"/>
    <property type="match status" value="1"/>
</dbReference>
<dbReference type="PROSITE" id="PS00104">
    <property type="entry name" value="EPSP_SYNTHASE_1"/>
    <property type="match status" value="1"/>
</dbReference>
<dbReference type="PROSITE" id="PS00885">
    <property type="entry name" value="EPSP_SYNTHASE_2"/>
    <property type="match status" value="1"/>
</dbReference>
<feature type="chain" id="PRO_0000411274" description="3-phosphoshikimate 1-carboxyvinyltransferase">
    <location>
        <begin position="1"/>
        <end position="430"/>
    </location>
</feature>
<feature type="active site" description="Proton acceptor" evidence="1">
    <location>
        <position position="315"/>
    </location>
</feature>
<feature type="binding site" evidence="1">
    <location>
        <position position="23"/>
    </location>
    <ligand>
        <name>3-phosphoshikimate</name>
        <dbReference type="ChEBI" id="CHEBI:145989"/>
    </ligand>
</feature>
<feature type="binding site" evidence="1">
    <location>
        <position position="23"/>
    </location>
    <ligand>
        <name>phosphoenolpyruvate</name>
        <dbReference type="ChEBI" id="CHEBI:58702"/>
    </ligand>
</feature>
<feature type="binding site" evidence="1">
    <location>
        <position position="24"/>
    </location>
    <ligand>
        <name>3-phosphoshikimate</name>
        <dbReference type="ChEBI" id="CHEBI:145989"/>
    </ligand>
</feature>
<feature type="binding site" evidence="1">
    <location>
        <position position="28"/>
    </location>
    <ligand>
        <name>3-phosphoshikimate</name>
        <dbReference type="ChEBI" id="CHEBI:145989"/>
    </ligand>
</feature>
<feature type="binding site" evidence="1">
    <location>
        <position position="95"/>
    </location>
    <ligand>
        <name>phosphoenolpyruvate</name>
        <dbReference type="ChEBI" id="CHEBI:58702"/>
    </ligand>
</feature>
<feature type="binding site" evidence="1">
    <location>
        <position position="123"/>
    </location>
    <ligand>
        <name>phosphoenolpyruvate</name>
        <dbReference type="ChEBI" id="CHEBI:58702"/>
    </ligand>
</feature>
<feature type="binding site" evidence="1">
    <location>
        <position position="169"/>
    </location>
    <ligand>
        <name>3-phosphoshikimate</name>
        <dbReference type="ChEBI" id="CHEBI:145989"/>
    </ligand>
</feature>
<feature type="binding site" evidence="1">
    <location>
        <position position="171"/>
    </location>
    <ligand>
        <name>3-phosphoshikimate</name>
        <dbReference type="ChEBI" id="CHEBI:145989"/>
    </ligand>
</feature>
<feature type="binding site" evidence="1">
    <location>
        <position position="171"/>
    </location>
    <ligand>
        <name>phosphoenolpyruvate</name>
        <dbReference type="ChEBI" id="CHEBI:58702"/>
    </ligand>
</feature>
<feature type="binding site" evidence="1">
    <location>
        <position position="315"/>
    </location>
    <ligand>
        <name>3-phosphoshikimate</name>
        <dbReference type="ChEBI" id="CHEBI:145989"/>
    </ligand>
</feature>
<feature type="binding site" evidence="1">
    <location>
        <position position="342"/>
    </location>
    <ligand>
        <name>3-phosphoshikimate</name>
        <dbReference type="ChEBI" id="CHEBI:145989"/>
    </ligand>
</feature>
<feature type="binding site" evidence="1">
    <location>
        <position position="346"/>
    </location>
    <ligand>
        <name>phosphoenolpyruvate</name>
        <dbReference type="ChEBI" id="CHEBI:58702"/>
    </ligand>
</feature>
<feature type="binding site" evidence="1">
    <location>
        <position position="388"/>
    </location>
    <ligand>
        <name>phosphoenolpyruvate</name>
        <dbReference type="ChEBI" id="CHEBI:58702"/>
    </ligand>
</feature>
<proteinExistence type="inferred from homology"/>
<organism>
    <name type="scientific">Streptococcus pyogenes serotype M3 (strain SSI-1)</name>
    <dbReference type="NCBI Taxonomy" id="193567"/>
    <lineage>
        <taxon>Bacteria</taxon>
        <taxon>Bacillati</taxon>
        <taxon>Bacillota</taxon>
        <taxon>Bacilli</taxon>
        <taxon>Lactobacillales</taxon>
        <taxon>Streptococcaceae</taxon>
        <taxon>Streptococcus</taxon>
    </lineage>
</organism>
<keyword id="KW-0028">Amino-acid biosynthesis</keyword>
<keyword id="KW-0057">Aromatic amino acid biosynthesis</keyword>
<keyword id="KW-0963">Cytoplasm</keyword>
<keyword id="KW-0808">Transferase</keyword>
<gene>
    <name evidence="1" type="primary">aroA</name>
    <name type="synonym">aroA.1</name>
    <name type="ordered locus">SPs0833</name>
</gene>
<comment type="function">
    <text evidence="1">Catalyzes the transfer of the enolpyruvyl moiety of phosphoenolpyruvate (PEP) to the 5-hydroxyl of shikimate-3-phosphate (S3P) to produce enolpyruvyl shikimate-3-phosphate and inorganic phosphate.</text>
</comment>
<comment type="catalytic activity">
    <reaction evidence="1">
        <text>3-phosphoshikimate + phosphoenolpyruvate = 5-O-(1-carboxyvinyl)-3-phosphoshikimate + phosphate</text>
        <dbReference type="Rhea" id="RHEA:21256"/>
        <dbReference type="ChEBI" id="CHEBI:43474"/>
        <dbReference type="ChEBI" id="CHEBI:57701"/>
        <dbReference type="ChEBI" id="CHEBI:58702"/>
        <dbReference type="ChEBI" id="CHEBI:145989"/>
        <dbReference type="EC" id="2.5.1.19"/>
    </reaction>
    <physiologicalReaction direction="left-to-right" evidence="1">
        <dbReference type="Rhea" id="RHEA:21257"/>
    </physiologicalReaction>
</comment>
<comment type="pathway">
    <text evidence="1">Metabolic intermediate biosynthesis; chorismate biosynthesis; chorismate from D-erythrose 4-phosphate and phosphoenolpyruvate: step 6/7.</text>
</comment>
<comment type="subunit">
    <text evidence="1">Monomer.</text>
</comment>
<comment type="subcellular location">
    <subcellularLocation>
        <location evidence="1">Cytoplasm</location>
    </subcellularLocation>
</comment>
<comment type="similarity">
    <text evidence="1">Belongs to the EPSP synthase family.</text>
</comment>
<name>AROA_STRPQ</name>
<protein>
    <recommendedName>
        <fullName evidence="1">3-phosphoshikimate 1-carboxyvinyltransferase</fullName>
        <ecNumber evidence="1">2.5.1.19</ecNumber>
    </recommendedName>
    <alternativeName>
        <fullName evidence="1">5-enolpyruvylshikimate-3-phosphate synthase</fullName>
        <shortName evidence="1">EPSP synthase</shortName>
        <shortName evidence="1">EPSPS</shortName>
    </alternativeName>
</protein>
<reference key="1">
    <citation type="journal article" date="2003" name="Genome Res.">
        <title>Genome sequence of an M3 strain of Streptococcus pyogenes reveals a large-scale genomic rearrangement in invasive strains and new insights into phage evolution.</title>
        <authorList>
            <person name="Nakagawa I."/>
            <person name="Kurokawa K."/>
            <person name="Yamashita A."/>
            <person name="Nakata M."/>
            <person name="Tomiyasu Y."/>
            <person name="Okahashi N."/>
            <person name="Kawabata S."/>
            <person name="Yamazaki K."/>
            <person name="Shiba T."/>
            <person name="Yasunaga T."/>
            <person name="Hayashi H."/>
            <person name="Hattori M."/>
            <person name="Hamada S."/>
        </authorList>
    </citation>
    <scope>NUCLEOTIDE SEQUENCE [LARGE SCALE GENOMIC DNA]</scope>
    <source>
        <strain>SSI-1</strain>
    </source>
</reference>
<sequence>MKRMKLRTNAGPLQGTIQVPGDKSISHRAVILGAVAKGETRVKGLLKGEDVLSTIQAFRNLGVRIEEKDDQLVIEGQGFQGLTAPCQTLNMGNSGTSMRLIAGLLAGQPFSVKMIGDESLSKRPMDRIVYPLKQMGVEISGETDRQFPPLQLQGNRNLQPITYTLPISSAQVKSAILLAALQAKGTTQVVEKEITRNHTEEMIQQFGGRLIVDGKRITLVGPQQLTAQEITVPGDISSAAFWLVAGLIIPGSELLLKNVGVNPTRTGILEVVEKMGAQIVYEDMNKKEQVTSIRVVYSRLKGTIISGGLIPRLIDELPIIALLATQAQGTTCIKDAQELRVKETDRIQVVTDTLNSMGANIKATADGMIIKGPTVLYGANTSTYGDHRIGMMTAIAALLVKQGQVHLDKEEAIMTSYPTFFKDLERLCHD</sequence>
<accession>P0CZ73</accession>
<accession>Q8K719</accession>
<evidence type="ECO:0000255" key="1">
    <source>
        <dbReference type="HAMAP-Rule" id="MF_00210"/>
    </source>
</evidence>